<evidence type="ECO:0000250" key="1"/>
<evidence type="ECO:0000255" key="2">
    <source>
        <dbReference type="PROSITE-ProRule" id="PRU00276"/>
    </source>
</evidence>
<evidence type="ECO:0000255" key="3">
    <source>
        <dbReference type="PROSITE-ProRule" id="PRU10095"/>
    </source>
</evidence>
<evidence type="ECO:0000269" key="4">
    <source>
    </source>
</evidence>
<evidence type="ECO:0000305" key="5"/>
<evidence type="ECO:0000305" key="6">
    <source>
    </source>
</evidence>
<organism>
    <name type="scientific">Bothrops pirajai</name>
    <name type="common">Piraja's lancehead</name>
    <dbReference type="NCBI Taxonomy" id="113192"/>
    <lineage>
        <taxon>Eukaryota</taxon>
        <taxon>Metazoa</taxon>
        <taxon>Chordata</taxon>
        <taxon>Craniata</taxon>
        <taxon>Vertebrata</taxon>
        <taxon>Euteleostomi</taxon>
        <taxon>Lepidosauria</taxon>
        <taxon>Squamata</taxon>
        <taxon>Bifurcata</taxon>
        <taxon>Unidentata</taxon>
        <taxon>Episquamata</taxon>
        <taxon>Toxicofera</taxon>
        <taxon>Serpentes</taxon>
        <taxon>Colubroidea</taxon>
        <taxon>Viperidae</taxon>
        <taxon>Crotalinae</taxon>
        <taxon>Bothrops</taxon>
    </lineage>
</organism>
<sequence length="198" mass="22586">TYIEVAVVADHRMFKKYNSNLNTIRKWVHEMVNSMNGVYRSMDVHLSLANLEVWSKKDLINVQKDSRETLKSFGEWRERDLLPRISHDNAQLLTAIVFDQQTIGRAYIGGMCDPRHSVGVVMDHSKINLQVAVTMAHELGHNLGMEHDENQCHCDAPSCVMXXXXXXXXXXXXXXCXXXXXXXXXTKHNPQCILNEPL</sequence>
<accession>P0DL29</accession>
<protein>
    <recommendedName>
        <fullName>Snake venom metalloproteinase BpirMP</fullName>
        <shortName>SVMP</shortName>
        <ecNumber>3.4.24.-</ecNumber>
    </recommendedName>
    <alternativeName>
        <fullName>Alpha-fibrinogenase</fullName>
    </alternativeName>
    <alternativeName>
        <fullName>Fibrinolytic metalloproteinase</fullName>
    </alternativeName>
    <alternativeName>
        <fullName>Zinc metalloproteinase</fullName>
    </alternativeName>
</protein>
<name>VM1_BOTPI</name>
<dbReference type="EC" id="3.4.24.-"/>
<dbReference type="GO" id="GO:0005576">
    <property type="term" value="C:extracellular region"/>
    <property type="evidence" value="ECO:0007669"/>
    <property type="project" value="UniProtKB-SubCell"/>
</dbReference>
<dbReference type="GO" id="GO:0005886">
    <property type="term" value="C:plasma membrane"/>
    <property type="evidence" value="ECO:0007669"/>
    <property type="project" value="TreeGrafter"/>
</dbReference>
<dbReference type="GO" id="GO:0046872">
    <property type="term" value="F:metal ion binding"/>
    <property type="evidence" value="ECO:0007669"/>
    <property type="project" value="UniProtKB-KW"/>
</dbReference>
<dbReference type="GO" id="GO:0004222">
    <property type="term" value="F:metalloendopeptidase activity"/>
    <property type="evidence" value="ECO:0007669"/>
    <property type="project" value="InterPro"/>
</dbReference>
<dbReference type="GO" id="GO:0090729">
    <property type="term" value="F:toxin activity"/>
    <property type="evidence" value="ECO:0007669"/>
    <property type="project" value="UniProtKB-KW"/>
</dbReference>
<dbReference type="GO" id="GO:0006508">
    <property type="term" value="P:proteolysis"/>
    <property type="evidence" value="ECO:0007669"/>
    <property type="project" value="UniProtKB-KW"/>
</dbReference>
<dbReference type="CDD" id="cd04269">
    <property type="entry name" value="ZnMc_adamalysin_II_like"/>
    <property type="match status" value="1"/>
</dbReference>
<dbReference type="FunFam" id="3.40.390.10:FF:000002">
    <property type="entry name" value="Disintegrin and metalloproteinase domain-containing protein 22"/>
    <property type="match status" value="1"/>
</dbReference>
<dbReference type="Gene3D" id="3.40.390.10">
    <property type="entry name" value="Collagenase (Catalytic Domain)"/>
    <property type="match status" value="1"/>
</dbReference>
<dbReference type="InterPro" id="IPR024079">
    <property type="entry name" value="MetalloPept_cat_dom_sf"/>
</dbReference>
<dbReference type="InterPro" id="IPR001590">
    <property type="entry name" value="Peptidase_M12B"/>
</dbReference>
<dbReference type="InterPro" id="IPR034027">
    <property type="entry name" value="Reprolysin_adamalysin"/>
</dbReference>
<dbReference type="PANTHER" id="PTHR11905">
    <property type="entry name" value="ADAM A DISINTEGRIN AND METALLOPROTEASE DOMAIN"/>
    <property type="match status" value="1"/>
</dbReference>
<dbReference type="PANTHER" id="PTHR11905:SF32">
    <property type="entry name" value="DISINTEGRIN AND METALLOPROTEINASE DOMAIN-CONTAINING PROTEIN 28"/>
    <property type="match status" value="1"/>
</dbReference>
<dbReference type="Pfam" id="PF01421">
    <property type="entry name" value="Reprolysin"/>
    <property type="match status" value="1"/>
</dbReference>
<dbReference type="SUPFAM" id="SSF55486">
    <property type="entry name" value="Metalloproteases ('zincins'), catalytic domain"/>
    <property type="match status" value="1"/>
</dbReference>
<dbReference type="PROSITE" id="PS50215">
    <property type="entry name" value="ADAM_MEPRO"/>
    <property type="match status" value="1"/>
</dbReference>
<dbReference type="PROSITE" id="PS00142">
    <property type="entry name" value="ZINC_PROTEASE"/>
    <property type="match status" value="1"/>
</dbReference>
<reference key="1">
    <citation type="journal article" date="2013" name="J. Proteomics">
        <title>Proteomic analysis of Bothrops pirajai snake venom and characterization of BpirMP, a new P-I metalloproteinase.</title>
        <authorList>
            <person name="Bernardes C.P."/>
            <person name="Menaldo D.L."/>
            <person name="Camacho E."/>
            <person name="Rosa J.C."/>
            <person name="Escalante T."/>
            <person name="Rucavado A."/>
            <person name="Lomonte B."/>
            <person name="Gutierrez J.M."/>
            <person name="Sampaio S.V."/>
        </authorList>
    </citation>
    <scope>PROTEIN SEQUENCE</scope>
    <scope>FUNCTION</scope>
    <scope>ACTIVITY REGULATION</scope>
    <scope>BIOPHYSICOCHEMICAL PROPERTIES</scope>
    <scope>MASS SPECTROMETRY</scope>
</reference>
<feature type="chain" id="PRO_0000422307" description="Snake venom metalloproteinase BpirMP">
    <location>
        <begin position="1" status="less than"/>
        <end position="198"/>
    </location>
</feature>
<feature type="domain" description="Peptidase M12B" evidence="2">
    <location>
        <begin position="1"/>
        <end position="197"/>
    </location>
</feature>
<feature type="active site" evidence="2 3">
    <location>
        <position position="138"/>
    </location>
</feature>
<feature type="binding site" evidence="1">
    <location>
        <position position="4"/>
    </location>
    <ligand>
        <name>Ca(2+)</name>
        <dbReference type="ChEBI" id="CHEBI:29108"/>
    </ligand>
</feature>
<feature type="binding site" evidence="1">
    <location>
        <position position="88"/>
    </location>
    <ligand>
        <name>Ca(2+)</name>
        <dbReference type="ChEBI" id="CHEBI:29108"/>
    </ligand>
</feature>
<feature type="binding site" evidence="1">
    <location>
        <position position="137"/>
    </location>
    <ligand>
        <name>Zn(2+)</name>
        <dbReference type="ChEBI" id="CHEBI:29105"/>
        <note>catalytic</note>
    </ligand>
</feature>
<feature type="binding site" evidence="1">
    <location>
        <position position="141"/>
    </location>
    <ligand>
        <name>Zn(2+)</name>
        <dbReference type="ChEBI" id="CHEBI:29105"/>
        <note>catalytic</note>
    </ligand>
</feature>
<feature type="binding site" evidence="1">
    <location>
        <position position="147"/>
    </location>
    <ligand>
        <name>Zn(2+)</name>
        <dbReference type="ChEBI" id="CHEBI:29105"/>
        <note>catalytic</note>
    </ligand>
</feature>
<feature type="binding site" evidence="1">
    <location>
        <position position="192"/>
    </location>
    <ligand>
        <name>Ca(2+)</name>
        <dbReference type="ChEBI" id="CHEBI:29108"/>
    </ligand>
</feature>
<feature type="binding site" evidence="1">
    <location>
        <position position="195"/>
    </location>
    <ligand>
        <name>Ca(2+)</name>
        <dbReference type="ChEBI" id="CHEBI:29108"/>
    </ligand>
</feature>
<feature type="disulfide bond" evidence="2">
    <location>
        <begin position="112"/>
        <end position="192"/>
    </location>
</feature>
<feature type="disulfide bond" evidence="2">
    <location>
        <begin position="152"/>
        <end position="176"/>
    </location>
</feature>
<feature type="disulfide bond" evidence="2">
    <location>
        <begin position="154"/>
        <end position="159"/>
    </location>
</feature>
<feature type="unsure residue" description="Assigned by comparison with orthologs">
    <location>
        <position position="3"/>
    </location>
</feature>
<feature type="unsure residue" description="Assigned by comparison with orthologs">
    <location>
        <position position="16"/>
    </location>
</feature>
<feature type="unsure residue" description="Assigned by comparison with orthologs">
    <location>
        <position position="21"/>
    </location>
</feature>
<feature type="unsure residue" description="Assigned by comparison with orthologs">
    <location>
        <position position="24"/>
    </location>
</feature>
<feature type="unsure residue" description="Assigned by comparison with orthologs">
    <location>
        <position position="46"/>
    </location>
</feature>
<feature type="unsure residue" description="Assigned by comparison with orthologs">
    <location>
        <position position="48"/>
    </location>
</feature>
<feature type="unsure residue" description="Assigned by comparison with orthologs">
    <location>
        <position position="51"/>
    </location>
</feature>
<feature type="unsure residue" description="Assigned by comparison with orthologs">
    <location>
        <position position="56"/>
    </location>
</feature>
<feature type="unsure residue" description="Assigned by comparison with orthologs">
    <location>
        <position position="59"/>
    </location>
</feature>
<feature type="unsure residue" description="Assigned by comparison with orthologs">
    <location>
        <position position="60"/>
    </location>
</feature>
<feature type="unsure residue" description="Assigned by comparison with orthologs">
    <location>
        <position position="63"/>
    </location>
</feature>
<feature type="unsure residue" description="Assigned by comparison with orthologs">
    <location>
        <position position="64"/>
    </location>
</feature>
<feature type="unsure residue" description="Assigned by comparison with orthologs">
    <location>
        <position position="70"/>
    </location>
</feature>
<feature type="unsure residue" description="Assigned by comparison with orthologs">
    <location>
        <position position="71"/>
    </location>
</feature>
<feature type="unsure residue" description="Assigned by comparison with orthologs">
    <location>
        <position position="81"/>
    </location>
</feature>
<feature type="unsure residue" description="Assigned by comparison with orthologs">
    <location>
        <position position="82"/>
    </location>
</feature>
<feature type="unsure residue" description="Assigned by comparison with orthologs">
    <location>
        <position position="85"/>
    </location>
</feature>
<feature type="unsure residue" description="Assigned by comparison with orthologs">
    <location>
        <position position="91"/>
    </location>
</feature>
<feature type="unsure residue" description="Assigned by comparison with orthologs">
    <location>
        <position position="92"/>
    </location>
</feature>
<feature type="unsure residue" description="Assigned by comparison with orthologs">
    <location>
        <position position="93"/>
    </location>
</feature>
<feature type="unsure residue" description="Assigned by comparison with orthologs">
    <location>
        <position position="96"/>
    </location>
</feature>
<feature type="unsure residue" description="Assigned by comparison with orthologs">
    <location>
        <position position="100"/>
    </location>
</feature>
<feature type="unsure residue" description="Assigned by comparison with orthologs">
    <location>
        <position position="101"/>
    </location>
</feature>
<feature type="unsure residue" description="Assigned by comparison with orthologs">
    <location>
        <position position="103"/>
    </location>
</feature>
<feature type="unsure residue" description="Assigned by comparison with orthologs">
    <location>
        <position position="108"/>
    </location>
</feature>
<feature type="unsure residue" description="Assigned by comparison with orthologs">
    <location>
        <position position="127"/>
    </location>
</feature>
<feature type="unsure residue" description="Assigned by comparison with orthologs">
    <location>
        <position position="129"/>
    </location>
</feature>
<feature type="unsure residue" description="Assigned by comparison with orthologs">
    <location>
        <position position="130"/>
    </location>
</feature>
<feature type="unsure residue" description="Assigned by comparison with orthologs">
    <location>
        <position position="139"/>
    </location>
</feature>
<feature type="unsure residue" description="Assigned by comparison with orthologs">
    <location>
        <position position="143"/>
    </location>
</feature>
<feature type="unsure residue" description="Assigned by comparison with orthologs">
    <location>
        <position position="151"/>
    </location>
</feature>
<feature type="unsure residue" description="Assigned by comparison with orthologs">
    <location>
        <position position="176"/>
    </location>
</feature>
<feature type="unsure residue" description="Assigned by comparison with orthologs">
    <location>
        <position position="192"/>
    </location>
</feature>
<feature type="unsure residue" description="Assigned by comparison with orthologs">
    <location>
        <position position="193"/>
    </location>
</feature>
<feature type="unsure residue" description="Assigned by comparison with orthologs">
    <location>
        <position position="194"/>
    </location>
</feature>
<feature type="unsure residue" description="Assigned by comparison with orthologs">
    <location>
        <position position="195"/>
    </location>
</feature>
<feature type="non-terminal residue">
    <location>
        <position position="1"/>
    </location>
</feature>
<comment type="function">
    <text evidence="4">Zinc metalloprotease that preferentially degrades Aalpha chain of fibrinogen (FGA) (at a dose of 5 ug, whereas at a dose of 10 ug, both FGA and FGB are completely degraded). Degrades fibrin gel in a dose-dependent manner, as well blood clots formed in vitro (thrombolytic activity). Induces hemorrhage (in the dorsal skin of mice), with an MHD of 50 ug. The basal membrane components collagen (all chains of type IV) (COL4A4), fibronectin (FN1), laminin and nidogen are all degraded by this toxin.</text>
</comment>
<comment type="cofactor">
    <cofactor evidence="1">
        <name>Zn(2+)</name>
        <dbReference type="ChEBI" id="CHEBI:29105"/>
    </cofactor>
    <text evidence="1">Binds 1 zinc ion per subunit.</text>
</comment>
<comment type="activity regulation">
    <text evidence="4">Inhibited by the chelating agents EDTA, EGTA and 1,10-phenanthroline. Is not inhibited by serine proteinase inhibitors aprotinin, leupeptin and benzamidine.</text>
</comment>
<comment type="biophysicochemical properties">
    <phDependence>
        <text evidence="4">Optimum pH is 6.0-10.5.</text>
    </phDependence>
    <temperatureDependence>
        <text evidence="4">Optimum temperature is 37 degrees Celsius.</text>
    </temperatureDependence>
</comment>
<comment type="subunit">
    <text evidence="1">Monomer.</text>
</comment>
<comment type="subcellular location">
    <subcellularLocation>
        <location>Secreted</location>
    </subcellularLocation>
</comment>
<comment type="tissue specificity">
    <text>Expressed by the venom gland.</text>
</comment>
<comment type="mass spectrometry" mass="23140.0" method="MALDI" evidence="4"/>
<comment type="miscellaneous">
    <text evidence="6">Negative results: is unable to promote plasma coagulation. Does not degrade gamma chain of fibrinogen (FGG) (PubMed:23385358).</text>
</comment>
<comment type="similarity">
    <text evidence="5">Belongs to the venom metalloproteinase (M12B) family. P-I subfamily.</text>
</comment>
<keyword id="KW-0106">Calcium</keyword>
<keyword id="KW-0903">Direct protein sequencing</keyword>
<keyword id="KW-1015">Disulfide bond</keyword>
<keyword id="KW-1206">Fibrinogenolytic toxin</keyword>
<keyword id="KW-1205">Fibrinolytic toxin</keyword>
<keyword id="KW-1200">Hemorrhagic toxin</keyword>
<keyword id="KW-1199">Hemostasis impairing toxin</keyword>
<keyword id="KW-0378">Hydrolase</keyword>
<keyword id="KW-0479">Metal-binding</keyword>
<keyword id="KW-0482">Metalloprotease</keyword>
<keyword id="KW-0645">Protease</keyword>
<keyword id="KW-0964">Secreted</keyword>
<keyword id="KW-0800">Toxin</keyword>
<keyword id="KW-0862">Zinc</keyword>
<proteinExistence type="evidence at protein level"/>